<reference key="1">
    <citation type="journal article" date="1998" name="Mol. Plant Microbe Interact.">
        <title>Magnaporthe grisea pathogenicity genes obtained through insertional mutagenesis.</title>
        <authorList>
            <person name="Sweigard J.A."/>
            <person name="Carroll A.M."/>
            <person name="Farrall L.F."/>
            <person name="Chumley F.G."/>
            <person name="Valent B."/>
        </authorList>
    </citation>
    <scope>NUCLEOTIDE SEQUENCE [GENOMIC DNA]</scope>
    <source>
        <strain>4091-5-8</strain>
    </source>
</reference>
<reference key="2">
    <citation type="journal article" date="2003" name="EMBO J.">
        <title>Trehalose synthesis and metabolism are required at different stages of plant infection by Magnaporthe grisea.</title>
        <authorList>
            <person name="Foster A.J."/>
            <person name="Jenkinson J.M."/>
            <person name="Talbot N.J."/>
        </authorList>
    </citation>
    <scope>NUCLEOTIDE SEQUENCE [GENOMIC DNA]</scope>
    <scope>INDUCTION</scope>
    <scope>FUNCTION</scope>
    <source>
        <strain>Guyane 11</strain>
    </source>
</reference>
<reference key="3">
    <citation type="journal article" date="2005" name="Nature">
        <title>The genome sequence of the rice blast fungus Magnaporthe grisea.</title>
        <authorList>
            <person name="Dean R.A."/>
            <person name="Talbot N.J."/>
            <person name="Ebbole D.J."/>
            <person name="Farman M.L."/>
            <person name="Mitchell T.K."/>
            <person name="Orbach M.J."/>
            <person name="Thon M.R."/>
            <person name="Kulkarni R."/>
            <person name="Xu J.-R."/>
            <person name="Pan H."/>
            <person name="Read N.D."/>
            <person name="Lee Y.-H."/>
            <person name="Carbone I."/>
            <person name="Brown D."/>
            <person name="Oh Y.Y."/>
            <person name="Donofrio N."/>
            <person name="Jeong J.S."/>
            <person name="Soanes D.M."/>
            <person name="Djonovic S."/>
            <person name="Kolomiets E."/>
            <person name="Rehmeyer C."/>
            <person name="Li W."/>
            <person name="Harding M."/>
            <person name="Kim S."/>
            <person name="Lebrun M.-H."/>
            <person name="Bohnert H."/>
            <person name="Coughlan S."/>
            <person name="Butler J."/>
            <person name="Calvo S.E."/>
            <person name="Ma L.-J."/>
            <person name="Nicol R."/>
            <person name="Purcell S."/>
            <person name="Nusbaum C."/>
            <person name="Galagan J.E."/>
            <person name="Birren B.W."/>
        </authorList>
    </citation>
    <scope>NUCLEOTIDE SEQUENCE [LARGE SCALE GENOMIC DNA]</scope>
    <source>
        <strain>70-15 / ATCC MYA-4617 / FGSC 8958</strain>
    </source>
</reference>
<accession>O42622</accession>
<accession>G4N1V8</accession>
<accession>Q875L8</accession>
<evidence type="ECO:0000250" key="1">
    <source>
        <dbReference type="UniProtKB" id="P13482"/>
    </source>
</evidence>
<evidence type="ECO:0000250" key="2">
    <source>
        <dbReference type="UniProtKB" id="P32356"/>
    </source>
</evidence>
<evidence type="ECO:0000256" key="3">
    <source>
        <dbReference type="SAM" id="MobiDB-lite"/>
    </source>
</evidence>
<evidence type="ECO:0000269" key="4">
    <source>
    </source>
</evidence>
<evidence type="ECO:0000305" key="5"/>
<sequence>MSEAPQARRVGSVDDHSVYDDAKTYYTSEERHNNSRSGPRQRTYSQNSLLGQMERLGLKEPFRRGSHDESNHNRRFLIQVDPTLESLKSQEDTDGNMQITIEDNGPKVLTLRTAGSNGHNRFDIRGTYMLSNLLQELTLAQEYGRKQVILDEARLNENPVNRLSRLIRDHFWDALTRRIDASSIEVAAKDPKDWTDDPRPRIYVPKGAPEQLEYYKKLAADKPDIRLDVVELPETITPEYVVGINKAPGLLAVDMEETVDPKTGERVMSGRPFVVPGGRFNELYGWDSYMESLGLLVNDKVYLAKSMVLNFCFCIKHYGKILNATRSYYLCRSQPPFLTDMALRVYDKIRHEPDATEFLRTAILAAIKEYHSVWVAEPRLDPVTGLSRYRPEGTGVPPETEADHFLHILEPYYKKHNMTFKEFVEAYNFGRIREPELDKYFLHDRAVRESGHDTSYRLEGVCADLATVDLNTLLFKYETDIARTIRNVFGDKLVIPAEYCVGSLQPGQVETSAIWDRRSKRRKLAIDKYLWNEEAGMYFDYDTAKRQQCNYESCTTFWALWAGVASPKQAAIMVTRALPKFEAYGGLLSGTEESRGQIGLDRPNRQWDYPYGWAPQQMLAWTGLYRYSFTEEAERLAYKWLFMITKAFSDFNGVVVEKYDVTRPVDPHRVDAEYGNQGLGFKGVAKEGFGWVNASYIYGLQIINAHMRRALGTLTPYDTFIKALEDNRNRALSEMV</sequence>
<organism>
    <name type="scientific">Pyricularia oryzae (strain 70-15 / ATCC MYA-4617 / FGSC 8958)</name>
    <name type="common">Rice blast fungus</name>
    <name type="synonym">Magnaporthe oryzae</name>
    <dbReference type="NCBI Taxonomy" id="242507"/>
    <lineage>
        <taxon>Eukaryota</taxon>
        <taxon>Fungi</taxon>
        <taxon>Dikarya</taxon>
        <taxon>Ascomycota</taxon>
        <taxon>Pezizomycotina</taxon>
        <taxon>Sordariomycetes</taxon>
        <taxon>Sordariomycetidae</taxon>
        <taxon>Magnaporthales</taxon>
        <taxon>Pyriculariaceae</taxon>
        <taxon>Pyricularia</taxon>
    </lineage>
</organism>
<protein>
    <recommendedName>
        <fullName>Cytosolic neutral trehalase</fullName>
        <ecNumber evidence="2">3.2.1.28</ecNumber>
    </recommendedName>
    <alternativeName>
        <fullName>Alpha,alpha-trehalase</fullName>
    </alternativeName>
    <alternativeName>
        <fullName>Alpha,alpha-trehalose glucohydrolase</fullName>
    </alternativeName>
</protein>
<name>TREB_PYRO7</name>
<comment type="function">
    <text evidence="2 4">Hydrolyzes intracellular trehalose to glucose (By similarity). Plays a role in pathogenicity, specifically in proliferation of invasive hyphae in rice blast disease (PubMed:12514128).</text>
</comment>
<comment type="catalytic activity">
    <reaction evidence="2">
        <text>alpha,alpha-trehalose + H2O = alpha-D-glucose + beta-D-glucose</text>
        <dbReference type="Rhea" id="RHEA:32675"/>
        <dbReference type="ChEBI" id="CHEBI:15377"/>
        <dbReference type="ChEBI" id="CHEBI:15903"/>
        <dbReference type="ChEBI" id="CHEBI:16551"/>
        <dbReference type="ChEBI" id="CHEBI:17925"/>
        <dbReference type="EC" id="3.2.1.28"/>
    </reaction>
</comment>
<comment type="cofactor">
    <cofactor evidence="2">
        <name>Ca(2+)</name>
        <dbReference type="ChEBI" id="CHEBI:29108"/>
    </cofactor>
</comment>
<comment type="pathway">
    <text evidence="5">Carbohydrate degradation.</text>
</comment>
<comment type="subcellular location">
    <subcellularLocation>
        <location evidence="2">Cytoplasm</location>
    </subcellularLocation>
</comment>
<comment type="induction">
    <text evidence="4">During sporulation, plant infection and in response to hyperosmotic stress.</text>
</comment>
<comment type="similarity">
    <text evidence="5">Belongs to the glycosyl hydrolase 37 family.</text>
</comment>
<dbReference type="EC" id="3.2.1.28" evidence="2"/>
<dbReference type="EMBL" id="AF027981">
    <property type="protein sequence ID" value="AAB88889.1"/>
    <property type="molecule type" value="Genomic_DNA"/>
</dbReference>
<dbReference type="EMBL" id="AY148092">
    <property type="protein sequence ID" value="AAN46743.1"/>
    <property type="molecule type" value="Genomic_DNA"/>
</dbReference>
<dbReference type="EMBL" id="CM001233">
    <property type="protein sequence ID" value="EHA52473.1"/>
    <property type="molecule type" value="Genomic_DNA"/>
</dbReference>
<dbReference type="RefSeq" id="XP_003712280.1">
    <property type="nucleotide sequence ID" value="XM_003712232.1"/>
</dbReference>
<dbReference type="SMR" id="O42622"/>
<dbReference type="FunCoup" id="O42622">
    <property type="interactions" value="297"/>
</dbReference>
<dbReference type="STRING" id="242507.O42622"/>
<dbReference type="CAZy" id="GH37">
    <property type="family name" value="Glycoside Hydrolase Family 37"/>
</dbReference>
<dbReference type="EnsemblFungi" id="MGG_09471T0">
    <property type="protein sequence ID" value="MGG_09471T0"/>
    <property type="gene ID" value="MGG_09471"/>
</dbReference>
<dbReference type="GeneID" id="2680514"/>
<dbReference type="KEGG" id="mgr:MGG_09471"/>
<dbReference type="VEuPathDB" id="FungiDB:MGG_09471"/>
<dbReference type="eggNOG" id="KOG0602">
    <property type="taxonomic scope" value="Eukaryota"/>
</dbReference>
<dbReference type="HOGENOM" id="CLU_006451_1_1_1"/>
<dbReference type="InParanoid" id="O42622"/>
<dbReference type="OMA" id="WLFMMTK"/>
<dbReference type="OrthoDB" id="3542292at2759"/>
<dbReference type="PHI-base" id="PHI:123"/>
<dbReference type="PHI-base" id="PHI:7227"/>
<dbReference type="PHI-base" id="PHI:775"/>
<dbReference type="PHI-base" id="PHI:794"/>
<dbReference type="Proteomes" id="UP000009058">
    <property type="component" value="Chromosome 3"/>
</dbReference>
<dbReference type="GO" id="GO:0005946">
    <property type="term" value="C:alpha,alpha-trehalose-phosphate synthase complex (UDP-forming)"/>
    <property type="evidence" value="ECO:0007669"/>
    <property type="project" value="EnsemblFungi"/>
</dbReference>
<dbReference type="GO" id="GO:0004555">
    <property type="term" value="F:alpha,alpha-trehalase activity"/>
    <property type="evidence" value="ECO:0007669"/>
    <property type="project" value="UniProtKB-EC"/>
</dbReference>
<dbReference type="GO" id="GO:0005509">
    <property type="term" value="F:calcium ion binding"/>
    <property type="evidence" value="ECO:0007669"/>
    <property type="project" value="EnsemblFungi"/>
</dbReference>
<dbReference type="GO" id="GO:0030437">
    <property type="term" value="P:ascospore formation"/>
    <property type="evidence" value="ECO:0007669"/>
    <property type="project" value="EnsemblFungi"/>
</dbReference>
<dbReference type="GO" id="GO:0005993">
    <property type="term" value="P:trehalose catabolic process"/>
    <property type="evidence" value="ECO:0007669"/>
    <property type="project" value="EnsemblFungi"/>
</dbReference>
<dbReference type="FunFam" id="1.50.10.10:FF:000026">
    <property type="entry name" value="Trehalase"/>
    <property type="match status" value="1"/>
</dbReference>
<dbReference type="Gene3D" id="1.50.10.10">
    <property type="match status" value="1"/>
</dbReference>
<dbReference type="InterPro" id="IPR008928">
    <property type="entry name" value="6-hairpin_glycosidase_sf"/>
</dbReference>
<dbReference type="InterPro" id="IPR012341">
    <property type="entry name" value="6hp_glycosidase-like_sf"/>
</dbReference>
<dbReference type="InterPro" id="IPR001661">
    <property type="entry name" value="Glyco_hydro_37"/>
</dbReference>
<dbReference type="InterPro" id="IPR018232">
    <property type="entry name" value="Glyco_hydro_37_CS"/>
</dbReference>
<dbReference type="InterPro" id="IPR011120">
    <property type="entry name" value="Trehalase_Ca-bd"/>
</dbReference>
<dbReference type="PANTHER" id="PTHR23403:SF6">
    <property type="entry name" value="CYTOSOLIC NEUTRAL TREHALASE-RELATED"/>
    <property type="match status" value="1"/>
</dbReference>
<dbReference type="PANTHER" id="PTHR23403">
    <property type="entry name" value="TREHALASE"/>
    <property type="match status" value="1"/>
</dbReference>
<dbReference type="Pfam" id="PF01204">
    <property type="entry name" value="Trehalase"/>
    <property type="match status" value="1"/>
</dbReference>
<dbReference type="Pfam" id="PF07492">
    <property type="entry name" value="Trehalase_Ca-bi"/>
    <property type="match status" value="1"/>
</dbReference>
<dbReference type="PRINTS" id="PR00744">
    <property type="entry name" value="GLHYDRLASE37"/>
</dbReference>
<dbReference type="SUPFAM" id="SSF48208">
    <property type="entry name" value="Six-hairpin glycosidases"/>
    <property type="match status" value="1"/>
</dbReference>
<dbReference type="PROSITE" id="PS00927">
    <property type="entry name" value="TREHALASE_1"/>
    <property type="match status" value="1"/>
</dbReference>
<dbReference type="PROSITE" id="PS00928">
    <property type="entry name" value="TREHALASE_2"/>
    <property type="match status" value="1"/>
</dbReference>
<proteinExistence type="evidence at transcript level"/>
<keyword id="KW-0106">Calcium</keyword>
<keyword id="KW-0963">Cytoplasm</keyword>
<keyword id="KW-0326">Glycosidase</keyword>
<keyword id="KW-0378">Hydrolase</keyword>
<keyword id="KW-0479">Metal-binding</keyword>
<keyword id="KW-1185">Reference proteome</keyword>
<keyword id="KW-0346">Stress response</keyword>
<feature type="chain" id="PRO_0000173795" description="Cytosolic neutral trehalase">
    <location>
        <begin position="1"/>
        <end position="736"/>
    </location>
</feature>
<feature type="region of interest" description="Disordered" evidence="3">
    <location>
        <begin position="1"/>
        <end position="47"/>
    </location>
</feature>
<feature type="compositionally biased region" description="Basic and acidic residues" evidence="3">
    <location>
        <begin position="11"/>
        <end position="33"/>
    </location>
</feature>
<feature type="compositionally biased region" description="Polar residues" evidence="3">
    <location>
        <begin position="35"/>
        <end position="47"/>
    </location>
</feature>
<feature type="active site" description="Proton donor/acceptor" evidence="2">
    <location>
        <position position="453"/>
    </location>
</feature>
<feature type="active site" description="Proton donor/acceptor" evidence="2">
    <location>
        <position position="657"/>
    </location>
</feature>
<feature type="binding site" evidence="2">
    <location>
        <position position="92"/>
    </location>
    <ligand>
        <name>Ca(2+)</name>
        <dbReference type="ChEBI" id="CHEBI:29108"/>
    </ligand>
</feature>
<feature type="binding site" evidence="2">
    <location>
        <position position="94"/>
    </location>
    <ligand>
        <name>Ca(2+)</name>
        <dbReference type="ChEBI" id="CHEBI:29108"/>
    </ligand>
</feature>
<feature type="binding site" evidence="2">
    <location>
        <position position="96"/>
    </location>
    <ligand>
        <name>Ca(2+)</name>
        <dbReference type="ChEBI" id="CHEBI:29108"/>
    </ligand>
</feature>
<feature type="binding site" evidence="2">
    <location>
        <position position="98"/>
    </location>
    <ligand>
        <name>Ca(2+)</name>
        <dbReference type="ChEBI" id="CHEBI:29108"/>
    </ligand>
</feature>
<feature type="binding site" evidence="2">
    <location>
        <position position="103"/>
    </location>
    <ligand>
        <name>Ca(2+)</name>
        <dbReference type="ChEBI" id="CHEBI:29108"/>
    </ligand>
</feature>
<feature type="binding site" evidence="1">
    <location>
        <position position="279"/>
    </location>
    <ligand>
        <name>substrate</name>
    </ligand>
</feature>
<feature type="binding site" evidence="2">
    <location>
        <begin position="286"/>
        <end position="287"/>
    </location>
    <ligand>
        <name>substrate</name>
    </ligand>
</feature>
<feature type="binding site" evidence="2">
    <location>
        <position position="323"/>
    </location>
    <ligand>
        <name>substrate</name>
    </ligand>
</feature>
<feature type="binding site" evidence="2">
    <location>
        <begin position="332"/>
        <end position="334"/>
    </location>
    <ligand>
        <name>substrate</name>
    </ligand>
</feature>
<feature type="binding site" evidence="2">
    <location>
        <position position="399"/>
    </location>
    <ligand>
        <name>substrate</name>
    </ligand>
</feature>
<feature type="binding site" evidence="2">
    <location>
        <position position="448"/>
    </location>
    <ligand>
        <name>substrate</name>
    </ligand>
</feature>
<feature type="binding site" evidence="2">
    <location>
        <position position="451"/>
    </location>
    <ligand>
        <name>substrate</name>
    </ligand>
</feature>
<feature type="sequence variant" description="In strain: Guyane 11.">
    <original>T</original>
    <variation>A</variation>
    <location>
        <position position="394"/>
    </location>
</feature>
<gene>
    <name type="primary">NTH1</name>
    <name type="synonym">PTH9</name>
    <name type="ORF">MGG_09471</name>
</gene>